<keyword id="KW-0903">Direct protein sequencing</keyword>
<keyword id="KW-0749">Sporulation</keyword>
<keyword id="KW-0800">Toxin</keyword>
<keyword id="KW-0843">Virulence</keyword>
<evidence type="ECO:0000256" key="1">
    <source>
        <dbReference type="SAM" id="MobiDB-lite"/>
    </source>
</evidence>
<evidence type="ECO:0000305" key="2"/>
<feature type="chain" id="PRO_0000174067" description="Pesticidal crystal protein Cry5Ab">
    <location>
        <begin position="1"/>
        <end position="1289"/>
    </location>
</feature>
<feature type="region of interest" description="Disordered" evidence="1">
    <location>
        <begin position="1263"/>
        <end position="1289"/>
    </location>
</feature>
<feature type="compositionally biased region" description="Low complexity" evidence="1">
    <location>
        <begin position="1274"/>
        <end position="1289"/>
    </location>
</feature>
<reference key="1">
    <citation type="patent" date="1991-12-27" number="EP0462721">
        <title>Novel Bacillus thuringiensis microbes active against nematodes, and genes encoding novel nematode-active toxins cloned from Bacillus thuringiensis isolates.</title>
        <authorList>
            <person name="Narva K.E."/>
            <person name="Payne J.M."/>
            <person name="Schwab G.E."/>
            <person name="Hickle L.A."/>
            <person name="Galasan T."/>
            <person name="Sick A.J."/>
        </authorList>
    </citation>
    <scope>NUCLEOTIDE SEQUENCE [GENOMIC DNA]</scope>
    <scope>PROTEIN SEQUENCE OF 2-15</scope>
    <source>
        <strain>NRRL B-18243 / PS17</strain>
    </source>
</reference>
<protein>
    <recommendedName>
        <fullName>Pesticidal crystal protein Cry5Ab</fullName>
    </recommendedName>
    <alternativeName>
        <fullName>142 kDa crystal protein</fullName>
    </alternativeName>
    <alternativeName>
        <fullName>Crystaline entomocidal protoxin</fullName>
    </alternativeName>
    <alternativeName>
        <fullName>Insecticidal delta-endotoxin CryVA(b)</fullName>
    </alternativeName>
</protein>
<proteinExistence type="evidence at protein level"/>
<comment type="function">
    <text>Endotoxin with nematicidal activity.</text>
</comment>
<comment type="developmental stage">
    <text>The crystal protein is produced during sporulation and is accumulated both as an inclusion and as part of the spore coat.</text>
</comment>
<comment type="miscellaneous">
    <text>Toxic segment of the protein is located in the N-terminus.</text>
</comment>
<comment type="similarity">
    <text evidence="2">Belongs to the delta endotoxin family.</text>
</comment>
<dbReference type="EMBL" id="L07026">
    <property type="protein sequence ID" value="AAA67693.1"/>
    <property type="molecule type" value="Genomic_DNA"/>
</dbReference>
<dbReference type="PIR" id="T18212">
    <property type="entry name" value="T18212"/>
</dbReference>
<dbReference type="SMR" id="Q45753"/>
<dbReference type="GO" id="GO:0090729">
    <property type="term" value="F:toxin activity"/>
    <property type="evidence" value="ECO:0007669"/>
    <property type="project" value="UniProtKB-KW"/>
</dbReference>
<dbReference type="GO" id="GO:0030435">
    <property type="term" value="P:sporulation resulting in formation of a cellular spore"/>
    <property type="evidence" value="ECO:0007669"/>
    <property type="project" value="UniProtKB-KW"/>
</dbReference>
<dbReference type="GO" id="GO:0001907">
    <property type="term" value="P:symbiont-mediated killing of host cell"/>
    <property type="evidence" value="ECO:0007669"/>
    <property type="project" value="InterPro"/>
</dbReference>
<dbReference type="CDD" id="cd04085">
    <property type="entry name" value="delta_endotoxin_C"/>
    <property type="match status" value="1"/>
</dbReference>
<dbReference type="Gene3D" id="2.100.10.40">
    <property type="match status" value="1"/>
</dbReference>
<dbReference type="Gene3D" id="2.60.120.260">
    <property type="entry name" value="Galactose-binding domain-like"/>
    <property type="match status" value="2"/>
</dbReference>
<dbReference type="Gene3D" id="1.20.190.10">
    <property type="entry name" value="Pesticidal crystal protein, N-terminal domain"/>
    <property type="match status" value="1"/>
</dbReference>
<dbReference type="InterPro" id="IPR041587">
    <property type="entry name" value="Cry_V"/>
</dbReference>
<dbReference type="InterPro" id="IPR008979">
    <property type="entry name" value="Galactose-bd-like_sf"/>
</dbReference>
<dbReference type="InterPro" id="IPR005638">
    <property type="entry name" value="Pest_crys_dom-III"/>
</dbReference>
<dbReference type="InterPro" id="IPR005639">
    <property type="entry name" value="Pest_crys_dom_I"/>
</dbReference>
<dbReference type="InterPro" id="IPR036716">
    <property type="entry name" value="Pest_crys_N_sf"/>
</dbReference>
<dbReference type="Pfam" id="PF17997">
    <property type="entry name" value="Cry1Ac_D5"/>
    <property type="match status" value="1"/>
</dbReference>
<dbReference type="Pfam" id="PF03944">
    <property type="entry name" value="Endotoxin_C"/>
    <property type="match status" value="1"/>
</dbReference>
<dbReference type="Pfam" id="PF03945">
    <property type="entry name" value="Endotoxin_N"/>
    <property type="match status" value="1"/>
</dbReference>
<dbReference type="SUPFAM" id="SSF56849">
    <property type="entry name" value="delta-Endotoxin (insectocide), N-terminal domain"/>
    <property type="match status" value="1"/>
</dbReference>
<dbReference type="SUPFAM" id="SSF49785">
    <property type="entry name" value="Galactose-binding domain-like"/>
    <property type="match status" value="2"/>
</dbReference>
<organism>
    <name type="scientific">Bacillus thuringiensis subsp. darmstadiensis</name>
    <dbReference type="NCBI Taxonomy" id="132264"/>
    <lineage>
        <taxon>Bacteria</taxon>
        <taxon>Bacillati</taxon>
        <taxon>Bacillota</taxon>
        <taxon>Bacilli</taxon>
        <taxon>Bacillales</taxon>
        <taxon>Bacillaceae</taxon>
        <taxon>Bacillus</taxon>
        <taxon>Bacillus cereus group</taxon>
    </lineage>
</organism>
<accession>Q45753</accession>
<gene>
    <name type="primary">cry5Ab</name>
    <name type="synonym">cryVA</name>
    <name type="synonym">cryVA(b)</name>
</gene>
<name>CR5AB_BACUD</name>
<sequence length="1289" mass="141984">MAILNELYPSVPYNVLAYTPPSFLPDAGTQATPADLTAYEQLLKNLEKGINAGTYSKAIADVLKGIFIDDTINYQTYVNIGLSLITLAVPEIGIFTPFIGLFFAALNKHDAPPPPNAKDIFEAMKPAIQEMIDRTLTADEQTFLNGEISGLQNLAARYQSTMDDIQSHGGFNKVDSGLIKKFTDEVLSLNSFYTDRLPVFITDNTADRTLLGLPYYAILASMHLMLLRDIITKGPTWDSKINFTPDAIDSFKTDIKNNIKLYSKTIYDVFQKGLASYGTPSDLESFAKKQKYIEIMTTHCLDFARLFPTFDPDLYPTGSGDISLQKTRRILSPFIPIRTADGLTLNNTSIDTSNWPNYENGNGAFPNPKERILKQFKLYPSWRAAQYGGLLQPYLWAIEVQDSVETRLYGQLPAVDPQAGPNYVSIDSSNPIIQINMDTWKTPPQGASGWNTNLMRGSVSGLSFLQRDGTRLSAGMGGGFADTIYSLPATHYLSYLYGTPYQTSDNYSGHVGALVGVSTPQEATLPNIIGQPDEQGNVSTMGFPFEKASYGGTVVKEWLNGANAMKLSPGQSIGIPITNVTSGEYQIRCRYASNDNTNVFFNVDTGGANPIFQQINFASTVDNNTGVQGANGVYVVKSIATTDNSFTVKIPAKTINVHLTNQGSSDVFLDRIEFVPILESNTVTIFNNSYTTGSANLIPAIAPLWSTSSDKALTGSMSITGRTTPNSDDALLRFFKTNYDTQTIPIPGSGKDFTNTLEIQDIVSIDIFVGSGLHGSDGSIKLDFTNNNSGSGGSPKSFTEQNDLENITTQVNALFTSNTQDALATDVSDHDIEEVVLKVDALSDEVFGKEKKTLRKFVNQAKRLSKARNLLVGGNFDNLDAWYRGRNVVNVSNHELLKSDHVLLPPPGLSPSYIFQKVEESKLKRNTRYTVSGFIAHATDLEIVVSRYGQEIKKVVQVPYGEAFPLTSSGPVCCIPHSTSNGTLGNPHFFSYSIDVGALDVDTNPGIEFGLRIVNPTGMARVSNLEIREDRPLAANEIRQVQRVARNWRTEYEKERAEVTSLIQPVINRINGLYDNGNWNGSIRSDISYQNIDAIVLPTLPKLRHWFMSDRFSEQGDIMAKFQGALNRAYAQLEQNTLLHNGHFTKDAANWTVEGDAHQVVLEDGKRVLRLPDWSSSVSQTIEIENFDPDKEYQLVFHGQGEGTVTLEHGEETKYIETHTHHFANFTTSQRQGLTFESNKVTVTISSEDGEFLVDNIALVEAPLPTDDQNSEGNTASSTNSDTSMNNNQ</sequence>